<dbReference type="EMBL" id="AM946015">
    <property type="protein sequence ID" value="CAR41021.1"/>
    <property type="molecule type" value="Genomic_DNA"/>
</dbReference>
<dbReference type="RefSeq" id="WP_012657927.1">
    <property type="nucleotide sequence ID" value="NC_012004.1"/>
</dbReference>
<dbReference type="SMR" id="B9DTR1"/>
<dbReference type="STRING" id="218495.SUB0392"/>
<dbReference type="GeneID" id="93825694"/>
<dbReference type="KEGG" id="sub:SUB0392"/>
<dbReference type="eggNOG" id="COG0782">
    <property type="taxonomic scope" value="Bacteria"/>
</dbReference>
<dbReference type="HOGENOM" id="CLU_101379_2_1_9"/>
<dbReference type="OrthoDB" id="9808774at2"/>
<dbReference type="Proteomes" id="UP000000449">
    <property type="component" value="Chromosome"/>
</dbReference>
<dbReference type="GO" id="GO:0003677">
    <property type="term" value="F:DNA binding"/>
    <property type="evidence" value="ECO:0007669"/>
    <property type="project" value="UniProtKB-UniRule"/>
</dbReference>
<dbReference type="GO" id="GO:0070063">
    <property type="term" value="F:RNA polymerase binding"/>
    <property type="evidence" value="ECO:0007669"/>
    <property type="project" value="InterPro"/>
</dbReference>
<dbReference type="GO" id="GO:0006354">
    <property type="term" value="P:DNA-templated transcription elongation"/>
    <property type="evidence" value="ECO:0007669"/>
    <property type="project" value="TreeGrafter"/>
</dbReference>
<dbReference type="GO" id="GO:0032784">
    <property type="term" value="P:regulation of DNA-templated transcription elongation"/>
    <property type="evidence" value="ECO:0007669"/>
    <property type="project" value="UniProtKB-UniRule"/>
</dbReference>
<dbReference type="FunFam" id="1.10.287.180:FF:000001">
    <property type="entry name" value="Transcription elongation factor GreA"/>
    <property type="match status" value="1"/>
</dbReference>
<dbReference type="FunFam" id="3.10.50.30:FF:000001">
    <property type="entry name" value="Transcription elongation factor GreA"/>
    <property type="match status" value="1"/>
</dbReference>
<dbReference type="Gene3D" id="3.10.50.30">
    <property type="entry name" value="Transcription elongation factor, GreA/GreB, C-terminal domain"/>
    <property type="match status" value="1"/>
</dbReference>
<dbReference type="Gene3D" id="1.10.287.180">
    <property type="entry name" value="Transcription elongation factor, GreA/GreB, N-terminal domain"/>
    <property type="match status" value="1"/>
</dbReference>
<dbReference type="HAMAP" id="MF_00105">
    <property type="entry name" value="GreA_GreB"/>
    <property type="match status" value="1"/>
</dbReference>
<dbReference type="InterPro" id="IPR036953">
    <property type="entry name" value="GreA/GreB_C_sf"/>
</dbReference>
<dbReference type="InterPro" id="IPR018151">
    <property type="entry name" value="TF_GreA/GreB_CS"/>
</dbReference>
<dbReference type="InterPro" id="IPR006359">
    <property type="entry name" value="Tscrpt_elong_fac_GreA"/>
</dbReference>
<dbReference type="InterPro" id="IPR028624">
    <property type="entry name" value="Tscrpt_elong_fac_GreA/B"/>
</dbReference>
<dbReference type="InterPro" id="IPR001437">
    <property type="entry name" value="Tscrpt_elong_fac_GreA/B_C"/>
</dbReference>
<dbReference type="InterPro" id="IPR023459">
    <property type="entry name" value="Tscrpt_elong_fac_GreA/B_fam"/>
</dbReference>
<dbReference type="InterPro" id="IPR022691">
    <property type="entry name" value="Tscrpt_elong_fac_GreA/B_N"/>
</dbReference>
<dbReference type="InterPro" id="IPR036805">
    <property type="entry name" value="Tscrpt_elong_fac_GreA/B_N_sf"/>
</dbReference>
<dbReference type="NCBIfam" id="TIGR01462">
    <property type="entry name" value="greA"/>
    <property type="match status" value="1"/>
</dbReference>
<dbReference type="NCBIfam" id="NF001260">
    <property type="entry name" value="PRK00226.1-1"/>
    <property type="match status" value="1"/>
</dbReference>
<dbReference type="NCBIfam" id="NF001263">
    <property type="entry name" value="PRK00226.1-4"/>
    <property type="match status" value="1"/>
</dbReference>
<dbReference type="PANTHER" id="PTHR30437">
    <property type="entry name" value="TRANSCRIPTION ELONGATION FACTOR GREA"/>
    <property type="match status" value="1"/>
</dbReference>
<dbReference type="PANTHER" id="PTHR30437:SF4">
    <property type="entry name" value="TRANSCRIPTION ELONGATION FACTOR GREA"/>
    <property type="match status" value="1"/>
</dbReference>
<dbReference type="Pfam" id="PF01272">
    <property type="entry name" value="GreA_GreB"/>
    <property type="match status" value="1"/>
</dbReference>
<dbReference type="Pfam" id="PF03449">
    <property type="entry name" value="GreA_GreB_N"/>
    <property type="match status" value="1"/>
</dbReference>
<dbReference type="PIRSF" id="PIRSF006092">
    <property type="entry name" value="GreA_GreB"/>
    <property type="match status" value="1"/>
</dbReference>
<dbReference type="SUPFAM" id="SSF54534">
    <property type="entry name" value="FKBP-like"/>
    <property type="match status" value="1"/>
</dbReference>
<dbReference type="SUPFAM" id="SSF46557">
    <property type="entry name" value="GreA transcript cleavage protein, N-terminal domain"/>
    <property type="match status" value="1"/>
</dbReference>
<dbReference type="PROSITE" id="PS00829">
    <property type="entry name" value="GREAB_1"/>
    <property type="match status" value="1"/>
</dbReference>
<dbReference type="PROSITE" id="PS00830">
    <property type="entry name" value="GREAB_2"/>
    <property type="match status" value="1"/>
</dbReference>
<feature type="chain" id="PRO_1000190228" description="Transcription elongation factor GreA">
    <location>
        <begin position="1"/>
        <end position="160"/>
    </location>
</feature>
<feature type="coiled-coil region" evidence="1">
    <location>
        <begin position="1"/>
        <end position="71"/>
    </location>
</feature>
<name>GREA_STRU0</name>
<sequence length="160" mass="17580">MAEKTYPMTKAEKEQLEKELEELKLVRRPEVVERIKIARSYGDLSENSEYDAAKDEQAFVEGQISTLETQIRFAEIIDSDAVAKDEVAIGKTVVVQEVGTTDKDTYHIVGSAGADIFSGKISNESPIAQALIGKKKGDIADIVSPATTYQVEIISVEKTK</sequence>
<accession>B9DTR1</accession>
<keyword id="KW-0175">Coiled coil</keyword>
<keyword id="KW-0238">DNA-binding</keyword>
<keyword id="KW-1185">Reference proteome</keyword>
<keyword id="KW-0804">Transcription</keyword>
<keyword id="KW-0805">Transcription regulation</keyword>
<protein>
    <recommendedName>
        <fullName evidence="1">Transcription elongation factor GreA</fullName>
    </recommendedName>
    <alternativeName>
        <fullName evidence="1">Transcript cleavage factor GreA</fullName>
    </alternativeName>
</protein>
<organism>
    <name type="scientific">Streptococcus uberis (strain ATCC BAA-854 / 0140J)</name>
    <dbReference type="NCBI Taxonomy" id="218495"/>
    <lineage>
        <taxon>Bacteria</taxon>
        <taxon>Bacillati</taxon>
        <taxon>Bacillota</taxon>
        <taxon>Bacilli</taxon>
        <taxon>Lactobacillales</taxon>
        <taxon>Streptococcaceae</taxon>
        <taxon>Streptococcus</taxon>
    </lineage>
</organism>
<gene>
    <name evidence="1" type="primary">greA</name>
    <name type="ordered locus">SUB0392</name>
</gene>
<proteinExistence type="inferred from homology"/>
<comment type="function">
    <text evidence="1">Necessary for efficient RNA polymerase transcription elongation past template-encoded arresting sites. The arresting sites in DNA have the property of trapping a certain fraction of elongating RNA polymerases that pass through, resulting in locked ternary complexes. Cleavage of the nascent transcript by cleavage factors such as GreA or GreB allows the resumption of elongation from the new 3'terminus. GreA releases sequences of 2 to 3 nucleotides.</text>
</comment>
<comment type="similarity">
    <text evidence="1">Belongs to the GreA/GreB family.</text>
</comment>
<reference key="1">
    <citation type="journal article" date="2009" name="BMC Genomics">
        <title>Evidence for niche adaptation in the genome of the bovine pathogen Streptococcus uberis.</title>
        <authorList>
            <person name="Ward P.N."/>
            <person name="Holden M.T.G."/>
            <person name="Leigh J.A."/>
            <person name="Lennard N."/>
            <person name="Bignell A."/>
            <person name="Barron A."/>
            <person name="Clark L."/>
            <person name="Quail M.A."/>
            <person name="Woodward J."/>
            <person name="Barrell B.G."/>
            <person name="Egan S.A."/>
            <person name="Field T.R."/>
            <person name="Maskell D."/>
            <person name="Kehoe M."/>
            <person name="Dowson C.G."/>
            <person name="Chanter N."/>
            <person name="Whatmore A.M."/>
            <person name="Bentley S.D."/>
            <person name="Parkhill J."/>
        </authorList>
    </citation>
    <scope>NUCLEOTIDE SEQUENCE [LARGE SCALE GENOMIC DNA]</scope>
    <source>
        <strain>ATCC BAA-854 / 0140J</strain>
    </source>
</reference>
<evidence type="ECO:0000255" key="1">
    <source>
        <dbReference type="HAMAP-Rule" id="MF_00105"/>
    </source>
</evidence>